<feature type="chain" id="PRO_0000355886" description="Large ribosomal subunit protein uL14c">
    <location>
        <begin position="1"/>
        <end position="122"/>
    </location>
</feature>
<proteinExistence type="inferred from homology"/>
<geneLocation type="chloroplast"/>
<keyword id="KW-0150">Chloroplast</keyword>
<keyword id="KW-0934">Plastid</keyword>
<keyword id="KW-0687">Ribonucleoprotein</keyword>
<keyword id="KW-0689">Ribosomal protein</keyword>
<keyword id="KW-0694">RNA-binding</keyword>
<keyword id="KW-0699">rRNA-binding</keyword>
<dbReference type="EMBL" id="AP009374">
    <property type="protein sequence ID" value="BAF50497.1"/>
    <property type="molecule type" value="Genomic_DNA"/>
</dbReference>
<dbReference type="RefSeq" id="YP_001123673.1">
    <property type="nucleotide sequence ID" value="NC_009273.1"/>
</dbReference>
<dbReference type="SMR" id="A4QLE2"/>
<dbReference type="GeneID" id="4962064"/>
<dbReference type="GO" id="GO:0009507">
    <property type="term" value="C:chloroplast"/>
    <property type="evidence" value="ECO:0007669"/>
    <property type="project" value="UniProtKB-SubCell"/>
</dbReference>
<dbReference type="GO" id="GO:0022625">
    <property type="term" value="C:cytosolic large ribosomal subunit"/>
    <property type="evidence" value="ECO:0007669"/>
    <property type="project" value="TreeGrafter"/>
</dbReference>
<dbReference type="GO" id="GO:0070180">
    <property type="term" value="F:large ribosomal subunit rRNA binding"/>
    <property type="evidence" value="ECO:0007669"/>
    <property type="project" value="TreeGrafter"/>
</dbReference>
<dbReference type="GO" id="GO:0003735">
    <property type="term" value="F:structural constituent of ribosome"/>
    <property type="evidence" value="ECO:0007669"/>
    <property type="project" value="InterPro"/>
</dbReference>
<dbReference type="GO" id="GO:0006412">
    <property type="term" value="P:translation"/>
    <property type="evidence" value="ECO:0007669"/>
    <property type="project" value="UniProtKB-UniRule"/>
</dbReference>
<dbReference type="CDD" id="cd00337">
    <property type="entry name" value="Ribosomal_uL14"/>
    <property type="match status" value="1"/>
</dbReference>
<dbReference type="FunFam" id="2.40.150.20:FF:000002">
    <property type="entry name" value="50S ribosomal protein L14, chloroplastic"/>
    <property type="match status" value="1"/>
</dbReference>
<dbReference type="Gene3D" id="2.40.150.20">
    <property type="entry name" value="Ribosomal protein L14"/>
    <property type="match status" value="1"/>
</dbReference>
<dbReference type="HAMAP" id="MF_01367">
    <property type="entry name" value="Ribosomal_uL14"/>
    <property type="match status" value="1"/>
</dbReference>
<dbReference type="InterPro" id="IPR000218">
    <property type="entry name" value="Ribosomal_uL14"/>
</dbReference>
<dbReference type="InterPro" id="IPR005745">
    <property type="entry name" value="Ribosomal_uL14_bac-type"/>
</dbReference>
<dbReference type="InterPro" id="IPR019972">
    <property type="entry name" value="Ribosomal_uL14_CS"/>
</dbReference>
<dbReference type="InterPro" id="IPR036853">
    <property type="entry name" value="Ribosomal_uL14_sf"/>
</dbReference>
<dbReference type="NCBIfam" id="TIGR01067">
    <property type="entry name" value="rplN_bact"/>
    <property type="match status" value="1"/>
</dbReference>
<dbReference type="PANTHER" id="PTHR11761">
    <property type="entry name" value="50S/60S RIBOSOMAL PROTEIN L14/L23"/>
    <property type="match status" value="1"/>
</dbReference>
<dbReference type="PANTHER" id="PTHR11761:SF3">
    <property type="entry name" value="LARGE RIBOSOMAL SUBUNIT PROTEIN UL14M"/>
    <property type="match status" value="1"/>
</dbReference>
<dbReference type="Pfam" id="PF00238">
    <property type="entry name" value="Ribosomal_L14"/>
    <property type="match status" value="1"/>
</dbReference>
<dbReference type="SMART" id="SM01374">
    <property type="entry name" value="Ribosomal_L14"/>
    <property type="match status" value="1"/>
</dbReference>
<dbReference type="SUPFAM" id="SSF50193">
    <property type="entry name" value="Ribosomal protein L14"/>
    <property type="match status" value="1"/>
</dbReference>
<dbReference type="PROSITE" id="PS00049">
    <property type="entry name" value="RIBOSOMAL_L14"/>
    <property type="match status" value="1"/>
</dbReference>
<organism>
    <name type="scientific">Lepidium virginicum</name>
    <name type="common">Virginia pepperweed</name>
    <dbReference type="NCBI Taxonomy" id="59292"/>
    <lineage>
        <taxon>Eukaryota</taxon>
        <taxon>Viridiplantae</taxon>
        <taxon>Streptophyta</taxon>
        <taxon>Embryophyta</taxon>
        <taxon>Tracheophyta</taxon>
        <taxon>Spermatophyta</taxon>
        <taxon>Magnoliopsida</taxon>
        <taxon>eudicotyledons</taxon>
        <taxon>Gunneridae</taxon>
        <taxon>Pentapetalae</taxon>
        <taxon>rosids</taxon>
        <taxon>malvids</taxon>
        <taxon>Brassicales</taxon>
        <taxon>Brassicaceae</taxon>
        <taxon>Lepidieae</taxon>
        <taxon>Lepidium</taxon>
    </lineage>
</organism>
<evidence type="ECO:0000255" key="1">
    <source>
        <dbReference type="HAMAP-Rule" id="MF_01367"/>
    </source>
</evidence>
<evidence type="ECO:0000305" key="2"/>
<gene>
    <name evidence="1" type="primary">rpl14</name>
</gene>
<protein>
    <recommendedName>
        <fullName evidence="1">Large ribosomal subunit protein uL14c</fullName>
    </recommendedName>
    <alternativeName>
        <fullName evidence="2">50S ribosomal protein L14, chloroplastic</fullName>
    </alternativeName>
</protein>
<accession>A4QLE2</accession>
<reference key="1">
    <citation type="submission" date="2007-03" db="EMBL/GenBank/DDBJ databases">
        <title>Sequencing analysis of Lepidium virginicum JO26 chloroplast DNA.</title>
        <authorList>
            <person name="Hosouchi T."/>
            <person name="Tsuruoka H."/>
            <person name="Kotani H."/>
        </authorList>
    </citation>
    <scope>NUCLEOTIDE SEQUENCE [LARGE SCALE GENOMIC DNA]</scope>
</reference>
<comment type="function">
    <text evidence="1">Binds to 23S rRNA.</text>
</comment>
<comment type="subunit">
    <text evidence="1">Part of the 50S ribosomal subunit.</text>
</comment>
<comment type="subcellular location">
    <subcellularLocation>
        <location>Plastid</location>
        <location>Chloroplast</location>
    </subcellularLocation>
</comment>
<comment type="similarity">
    <text evidence="1">Belongs to the universal ribosomal protein uL14 family.</text>
</comment>
<sequence>MIQPQTYLNVADNSGARELMCIRIIGASNRRYAHIGDVIVAVIKEAIPNTPLERSEVIRAVIVRTCKELKRNNGTIIRYDDNAAVVIDQEGNPKGTRVFGAIPRELRQLNFTKIVSLAPEVL</sequence>
<name>RK14_LEPVR</name>